<comment type="function">
    <text>May participate in lipoprotein metabolism.</text>
</comment>
<comment type="interaction">
    <interactant intactId="EBI-18302142">
        <id>P55056</id>
    </interactant>
    <interactant intactId="EBI-4290634">
        <id>Q9BQE5</id>
        <label>APOL2</label>
    </interactant>
    <organismsDiffer>false</organismsDiffer>
    <experiments>3</experiments>
</comment>
<comment type="interaction">
    <interactant intactId="EBI-18302142">
        <id>P55056</id>
    </interactant>
    <interactant intactId="EBI-707714">
        <id>Q92843</id>
        <label>BCL2L2</label>
    </interactant>
    <organismsDiffer>false</organismsDiffer>
    <experiments>3</experiments>
</comment>
<comment type="interaction">
    <interactant intactId="EBI-18302142">
        <id>P55056</id>
    </interactant>
    <interactant intactId="EBI-517508">
        <id>Q9NR28</id>
        <label>DIABLO</label>
    </interactant>
    <organismsDiffer>false</organismsDiffer>
    <experiments>3</experiments>
</comment>
<comment type="interaction">
    <interactant intactId="EBI-18302142">
        <id>P55056</id>
    </interactant>
    <interactant intactId="EBI-9304251">
        <id>Q05329</id>
        <label>GAD2</label>
    </interactant>
    <organismsDiffer>false</organismsDiffer>
    <experiments>3</experiments>
</comment>
<comment type="interaction">
    <interactant intactId="EBI-18302142">
        <id>P55056</id>
    </interactant>
    <interactant intactId="EBI-11320924">
        <id>Q96QA5</id>
        <label>GSDMA</label>
    </interactant>
    <organismsDiffer>false</organismsDiffer>
    <experiments>3</experiments>
</comment>
<comment type="interaction">
    <interactant intactId="EBI-18302142">
        <id>P55056</id>
    </interactant>
    <interactant intactId="EBI-23832675">
        <id>P40305-1</id>
        <label>IFI27</label>
    </interactant>
    <organismsDiffer>false</organismsDiffer>
    <experiments>3</experiments>
</comment>
<comment type="interaction">
    <interactant intactId="EBI-18302142">
        <id>P55056</id>
    </interactant>
    <interactant intactId="EBI-1549822">
        <id>Q6P1Q0</id>
        <label>LETMD1</label>
    </interactant>
    <organismsDiffer>false</organismsDiffer>
    <experiments>3</experiments>
</comment>
<comment type="interaction">
    <interactant intactId="EBI-18302142">
        <id>P55056</id>
    </interactant>
    <interactant intactId="EBI-1042937">
        <id>Q8WWC4</id>
        <label>MAIP1</label>
    </interactant>
    <organismsDiffer>false</organismsDiffer>
    <experiments>3</experiments>
</comment>
<comment type="interaction">
    <interactant intactId="EBI-18302142">
        <id>P55056</id>
    </interactant>
    <interactant intactId="EBI-12886442">
        <id>Q5TGZ0</id>
        <label>MICOS10</label>
    </interactant>
    <organismsDiffer>false</organismsDiffer>
    <experiments>3</experiments>
</comment>
<comment type="interaction">
    <interactant intactId="EBI-18302142">
        <id>P55056</id>
    </interactant>
    <interactant intactId="EBI-1053887">
        <id>Q5XKP0</id>
        <label>MICOS13</label>
    </interactant>
    <organismsDiffer>false</organismsDiffer>
    <experiments>3</experiments>
</comment>
<comment type="interaction">
    <interactant intactId="EBI-18302142">
        <id>P55056</id>
    </interactant>
    <interactant intactId="EBI-725252">
        <id>Q9UMS0</id>
        <label>NFU1</label>
    </interactant>
    <organismsDiffer>false</organismsDiffer>
    <experiments>3</experiments>
</comment>
<comment type="interaction">
    <interactant intactId="EBI-18302142">
        <id>P55056</id>
    </interactant>
    <interactant intactId="EBI-18254170">
        <id>Q9H237-2</id>
        <label>PORCN</label>
    </interactant>
    <organismsDiffer>false</organismsDiffer>
    <experiments>3</experiments>
</comment>
<comment type="interaction">
    <interactant intactId="EBI-18302142">
        <id>P55056</id>
    </interactant>
    <interactant intactId="EBI-12736320">
        <id>Q8WXG1</id>
        <label>RSAD2</label>
    </interactant>
    <organismsDiffer>false</organismsDiffer>
    <experiments>3</experiments>
</comment>
<comment type="interaction">
    <interactant intactId="EBI-18302142">
        <id>P55056</id>
    </interactant>
    <interactant intactId="EBI-714881">
        <id>Q9HC62</id>
        <label>SENP2</label>
    </interactant>
    <organismsDiffer>false</organismsDiffer>
    <experiments>3</experiments>
</comment>
<comment type="interaction">
    <interactant intactId="EBI-18302142">
        <id>P55056</id>
    </interactant>
    <interactant intactId="EBI-10244848">
        <id>Q5SQN1</id>
        <label>SNAP47</label>
    </interactant>
    <organismsDiffer>false</organismsDiffer>
    <experiments>3</experiments>
</comment>
<comment type="interaction">
    <interactant intactId="EBI-18302142">
        <id>P55056</id>
    </interactant>
    <interactant intactId="EBI-10238936">
        <id>Q17RD7</id>
        <label>SYT16</label>
    </interactant>
    <organismsDiffer>false</organismsDiffer>
    <experiments>3</experiments>
</comment>
<comment type="interaction">
    <interactant intactId="EBI-18302142">
        <id>P55056</id>
    </interactant>
    <interactant intactId="EBI-9254454">
        <id>Q96BZ9</id>
        <label>TBC1D20</label>
    </interactant>
    <organismsDiffer>false</organismsDiffer>
    <experiments>3</experiments>
</comment>
<comment type="interaction">
    <interactant intactId="EBI-18302142">
        <id>P55056</id>
    </interactant>
    <interactant intactId="EBI-941422">
        <id>P07204</id>
        <label>THBD</label>
    </interactant>
    <organismsDiffer>false</organismsDiffer>
    <experiments>3</experiments>
</comment>
<comment type="interaction">
    <interactant intactId="EBI-18302142">
        <id>P55056</id>
    </interactant>
    <interactant intactId="EBI-6268651">
        <id>Q9NPL8</id>
        <label>TIMMDC1</label>
    </interactant>
    <organismsDiffer>false</organismsDiffer>
    <experiments>3</experiments>
</comment>
<comment type="interaction">
    <interactant intactId="EBI-18302142">
        <id>P55056</id>
    </interactant>
    <interactant intactId="EBI-8638294">
        <id>Q9NUH8</id>
        <label>TMEM14B</label>
    </interactant>
    <organismsDiffer>false</organismsDiffer>
    <experiments>3</experiments>
</comment>
<comment type="interaction">
    <interactant intactId="EBI-18302142">
        <id>P55056</id>
    </interactant>
    <interactant intactId="EBI-17249488">
        <id>Q6ZUI0</id>
        <label>TPRG1</label>
    </interactant>
    <organismsDiffer>false</organismsDiffer>
    <experiments>3</experiments>
</comment>
<comment type="interaction">
    <interactant intactId="EBI-18302142">
        <id>P55056</id>
    </interactant>
    <interactant intactId="EBI-741480">
        <id>Q9UMX0</id>
        <label>UBQLN1</label>
    </interactant>
    <organismsDiffer>false</organismsDiffer>
    <experiments>3</experiments>
</comment>
<comment type="interaction">
    <interactant intactId="EBI-18302142">
        <id>P55056</id>
    </interactant>
    <interactant intactId="EBI-947187">
        <id>Q9UHD9</id>
        <label>UBQLN2</label>
    </interactant>
    <organismsDiffer>false</organismsDiffer>
    <experiments>3</experiments>
</comment>
<comment type="subcellular location">
    <subcellularLocation>
        <location>Secreted</location>
    </subcellularLocation>
</comment>
<comment type="tissue specificity">
    <text>Expressed by the liver and secreted in plasma.</text>
</comment>
<comment type="similarity">
    <text evidence="6">Belongs to the apolipoprotein C4 family.</text>
</comment>
<accession>P55056</accession>
<accession>B3KWY6</accession>
<accession>Q53YY8</accession>
<dbReference type="EMBL" id="U32576">
    <property type="protein sequence ID" value="AAA91653.1"/>
    <property type="molecule type" value="Genomic_DNA"/>
</dbReference>
<dbReference type="EMBL" id="AY422953">
    <property type="protein sequence ID" value="AAQ91812.1"/>
    <property type="molecule type" value="Genomic_DNA"/>
</dbReference>
<dbReference type="EMBL" id="AK126257">
    <property type="protein sequence ID" value="BAG54298.1"/>
    <property type="molecule type" value="mRNA"/>
</dbReference>
<dbReference type="EMBL" id="CH471126">
    <property type="protein sequence ID" value="EAW57310.1"/>
    <property type="molecule type" value="Genomic_DNA"/>
</dbReference>
<dbReference type="EMBL" id="BC020723">
    <property type="protein sequence ID" value="AAH20723.1"/>
    <property type="molecule type" value="mRNA"/>
</dbReference>
<dbReference type="CCDS" id="CCDS12649.1"/>
<dbReference type="RefSeq" id="NP_001637.1">
    <property type="nucleotide sequence ID" value="NM_001646.3"/>
</dbReference>
<dbReference type="BioGRID" id="106843">
    <property type="interactions" value="29"/>
</dbReference>
<dbReference type="FunCoup" id="P55056">
    <property type="interactions" value="17"/>
</dbReference>
<dbReference type="IntAct" id="P55056">
    <property type="interactions" value="25"/>
</dbReference>
<dbReference type="STRING" id="9606.ENSP00000468236"/>
<dbReference type="GlyConnect" id="2021">
    <property type="glycosylation" value="1 N-Linked glycan (1 site)"/>
</dbReference>
<dbReference type="GlyCosmos" id="P55056">
    <property type="glycosylation" value="1 site, 2 glycans"/>
</dbReference>
<dbReference type="GlyGen" id="P55056">
    <property type="glycosylation" value="1 site, 3 N-linked glycans (1 site)"/>
</dbReference>
<dbReference type="iPTMnet" id="P55056"/>
<dbReference type="PhosphoSitePlus" id="P55056"/>
<dbReference type="BioMuta" id="APOC4"/>
<dbReference type="DMDM" id="1703333"/>
<dbReference type="CPTAC" id="non-CPTAC-2626"/>
<dbReference type="MassIVE" id="P55056"/>
<dbReference type="PaxDb" id="9606-ENSP00000468236"/>
<dbReference type="PeptideAtlas" id="P55056"/>
<dbReference type="ProteomicsDB" id="56768"/>
<dbReference type="Antibodypedia" id="73673">
    <property type="antibodies" value="123 antibodies from 23 providers"/>
</dbReference>
<dbReference type="DNASU" id="346"/>
<dbReference type="Ensembl" id="ENST00000592954.2">
    <property type="protein sequence ID" value="ENSP00000468236.1"/>
    <property type="gene ID" value="ENSG00000267467.4"/>
</dbReference>
<dbReference type="GeneID" id="346"/>
<dbReference type="KEGG" id="hsa:346"/>
<dbReference type="MANE-Select" id="ENST00000592954.2">
    <property type="protein sequence ID" value="ENSP00000468236.1"/>
    <property type="RefSeq nucleotide sequence ID" value="NM_001646.3"/>
    <property type="RefSeq protein sequence ID" value="NP_001637.1"/>
</dbReference>
<dbReference type="UCSC" id="uc060zuq.1">
    <property type="organism name" value="human"/>
</dbReference>
<dbReference type="AGR" id="HGNC:611"/>
<dbReference type="CTD" id="346"/>
<dbReference type="DisGeNET" id="346"/>
<dbReference type="GeneCards" id="APOC4"/>
<dbReference type="HGNC" id="HGNC:611">
    <property type="gene designation" value="APOC4"/>
</dbReference>
<dbReference type="HPA" id="ENSG00000267467">
    <property type="expression patterns" value="Tissue enriched (liver)"/>
</dbReference>
<dbReference type="MIM" id="600745">
    <property type="type" value="gene"/>
</dbReference>
<dbReference type="neXtProt" id="NX_P55056"/>
<dbReference type="OpenTargets" id="ENSG00000224916"/>
<dbReference type="OpenTargets" id="ENSG00000267467"/>
<dbReference type="PharmGKB" id="PA54"/>
<dbReference type="VEuPathDB" id="HostDB:ENSG00000267467"/>
<dbReference type="eggNOG" id="ENOG502TE52">
    <property type="taxonomic scope" value="Eukaryota"/>
</dbReference>
<dbReference type="GeneTree" id="ENSGT00390000015914"/>
<dbReference type="HOGENOM" id="CLU_161459_0_0_1"/>
<dbReference type="InParanoid" id="P55056"/>
<dbReference type="OMA" id="KWQWFWG"/>
<dbReference type="OrthoDB" id="9449255at2759"/>
<dbReference type="PAN-GO" id="P55056">
    <property type="GO annotations" value="4 GO annotations based on evolutionary models"/>
</dbReference>
<dbReference type="PhylomeDB" id="P55056"/>
<dbReference type="TreeFam" id="TF336879"/>
<dbReference type="PathwayCommons" id="P55056"/>
<dbReference type="Reactome" id="R-HSA-8866423">
    <property type="pathway name" value="VLDL assembly"/>
</dbReference>
<dbReference type="Reactome" id="R-HSA-8964046">
    <property type="pathway name" value="VLDL clearance"/>
</dbReference>
<dbReference type="Reactome" id="R-HSA-9029569">
    <property type="pathway name" value="NR1H3 &amp; NR1H2 regulate gene expression linked to cholesterol transport and efflux"/>
</dbReference>
<dbReference type="SignaLink" id="P55056"/>
<dbReference type="BioGRID-ORCS" id="346">
    <property type="hits" value="8 hits in 1130 CRISPR screens"/>
</dbReference>
<dbReference type="GeneWiki" id="Apolipoprotein_C4"/>
<dbReference type="GenomeRNAi" id="346"/>
<dbReference type="Pharos" id="P55056">
    <property type="development level" value="Tbio"/>
</dbReference>
<dbReference type="PRO" id="PR:P55056"/>
<dbReference type="Proteomes" id="UP000005640">
    <property type="component" value="Chromosome 19"/>
</dbReference>
<dbReference type="RNAct" id="P55056">
    <property type="molecule type" value="protein"/>
</dbReference>
<dbReference type="Bgee" id="ENSG00000267467">
    <property type="expression patterns" value="Expressed in right lobe of liver and 83 other cell types or tissues"/>
</dbReference>
<dbReference type="ExpressionAtlas" id="P55056">
    <property type="expression patterns" value="baseline and differential"/>
</dbReference>
<dbReference type="GO" id="GO:0005576">
    <property type="term" value="C:extracellular region"/>
    <property type="evidence" value="ECO:0000304"/>
    <property type="project" value="Reactome"/>
</dbReference>
<dbReference type="GO" id="GO:0034364">
    <property type="term" value="C:high-density lipoprotein particle"/>
    <property type="evidence" value="ECO:0000314"/>
    <property type="project" value="BHF-UCL"/>
</dbReference>
<dbReference type="GO" id="GO:0034361">
    <property type="term" value="C:very-low-density lipoprotein particle"/>
    <property type="evidence" value="ECO:0000314"/>
    <property type="project" value="BHF-UCL"/>
</dbReference>
<dbReference type="GO" id="GO:0005319">
    <property type="term" value="F:lipid transporter activity"/>
    <property type="evidence" value="ECO:0000304"/>
    <property type="project" value="ProtInc"/>
</dbReference>
<dbReference type="GO" id="GO:0006629">
    <property type="term" value="P:lipid metabolic process"/>
    <property type="evidence" value="ECO:0000304"/>
    <property type="project" value="ProtInc"/>
</dbReference>
<dbReference type="GO" id="GO:0019915">
    <property type="term" value="P:lipid storage"/>
    <property type="evidence" value="ECO:0000315"/>
    <property type="project" value="BHF-UCL"/>
</dbReference>
<dbReference type="GO" id="GO:0010890">
    <property type="term" value="P:positive regulation of triglyceride storage"/>
    <property type="evidence" value="ECO:0000318"/>
    <property type="project" value="GO_Central"/>
</dbReference>
<dbReference type="GO" id="GO:0070328">
    <property type="term" value="P:triglyceride homeostasis"/>
    <property type="evidence" value="ECO:0000315"/>
    <property type="project" value="BHF-UCL"/>
</dbReference>
<dbReference type="InterPro" id="IPR028120">
    <property type="entry name" value="APOC4"/>
</dbReference>
<dbReference type="PANTHER" id="PTHR32288">
    <property type="entry name" value="APOLIPOPROTEIN C-IV"/>
    <property type="match status" value="1"/>
</dbReference>
<dbReference type="PANTHER" id="PTHR32288:SF0">
    <property type="entry name" value="APOLIPOPROTEIN C-IV"/>
    <property type="match status" value="1"/>
</dbReference>
<dbReference type="Pfam" id="PF15119">
    <property type="entry name" value="APOC4"/>
    <property type="match status" value="1"/>
</dbReference>
<reference key="1">
    <citation type="journal article" date="1995" name="Genomics">
        <title>Identification and characterization of a new human gene (APOC4) in the apolipoprotein E, C-I, and C-II gene locus.</title>
        <authorList>
            <person name="Allan C.M."/>
            <person name="Walker D."/>
            <person name="Segrest J.P."/>
            <person name="Taylor J.M."/>
        </authorList>
    </citation>
    <scope>NUCLEOTIDE SEQUENCE [GENOMIC DNA]</scope>
</reference>
<reference key="2">
    <citation type="submission" date="2003-09" db="EMBL/GenBank/DDBJ databases">
        <authorList>
            <person name="Nickerson D.A."/>
            <person name="Smith J.D."/>
            <person name="Fullerton S.M."/>
            <person name="Clark A.G."/>
            <person name="Stengard J.H."/>
            <person name="Salomaa V."/>
            <person name="Boerwinkle E."/>
            <person name="Sing C.F."/>
            <person name="Weiss K.M."/>
        </authorList>
    </citation>
    <scope>NUCLEOTIDE SEQUENCE [GENOMIC DNA]</scope>
    <scope>VARIANT PRO-36</scope>
</reference>
<reference key="3">
    <citation type="journal article" date="2004" name="Nat. Genet.">
        <title>Complete sequencing and characterization of 21,243 full-length human cDNAs.</title>
        <authorList>
            <person name="Ota T."/>
            <person name="Suzuki Y."/>
            <person name="Nishikawa T."/>
            <person name="Otsuki T."/>
            <person name="Sugiyama T."/>
            <person name="Irie R."/>
            <person name="Wakamatsu A."/>
            <person name="Hayashi K."/>
            <person name="Sato H."/>
            <person name="Nagai K."/>
            <person name="Kimura K."/>
            <person name="Makita H."/>
            <person name="Sekine M."/>
            <person name="Obayashi M."/>
            <person name="Nishi T."/>
            <person name="Shibahara T."/>
            <person name="Tanaka T."/>
            <person name="Ishii S."/>
            <person name="Yamamoto J."/>
            <person name="Saito K."/>
            <person name="Kawai Y."/>
            <person name="Isono Y."/>
            <person name="Nakamura Y."/>
            <person name="Nagahari K."/>
            <person name="Murakami K."/>
            <person name="Yasuda T."/>
            <person name="Iwayanagi T."/>
            <person name="Wagatsuma M."/>
            <person name="Shiratori A."/>
            <person name="Sudo H."/>
            <person name="Hosoiri T."/>
            <person name="Kaku Y."/>
            <person name="Kodaira H."/>
            <person name="Kondo H."/>
            <person name="Sugawara M."/>
            <person name="Takahashi M."/>
            <person name="Kanda K."/>
            <person name="Yokoi T."/>
            <person name="Furuya T."/>
            <person name="Kikkawa E."/>
            <person name="Omura Y."/>
            <person name="Abe K."/>
            <person name="Kamihara K."/>
            <person name="Katsuta N."/>
            <person name="Sato K."/>
            <person name="Tanikawa M."/>
            <person name="Yamazaki M."/>
            <person name="Ninomiya K."/>
            <person name="Ishibashi T."/>
            <person name="Yamashita H."/>
            <person name="Murakawa K."/>
            <person name="Fujimori K."/>
            <person name="Tanai H."/>
            <person name="Kimata M."/>
            <person name="Watanabe M."/>
            <person name="Hiraoka S."/>
            <person name="Chiba Y."/>
            <person name="Ishida S."/>
            <person name="Ono Y."/>
            <person name="Takiguchi S."/>
            <person name="Watanabe S."/>
            <person name="Yosida M."/>
            <person name="Hotuta T."/>
            <person name="Kusano J."/>
            <person name="Kanehori K."/>
            <person name="Takahashi-Fujii A."/>
            <person name="Hara H."/>
            <person name="Tanase T.-O."/>
            <person name="Nomura Y."/>
            <person name="Togiya S."/>
            <person name="Komai F."/>
            <person name="Hara R."/>
            <person name="Takeuchi K."/>
            <person name="Arita M."/>
            <person name="Imose N."/>
            <person name="Musashino K."/>
            <person name="Yuuki H."/>
            <person name="Oshima A."/>
            <person name="Sasaki N."/>
            <person name="Aotsuka S."/>
            <person name="Yoshikawa Y."/>
            <person name="Matsunawa H."/>
            <person name="Ichihara T."/>
            <person name="Shiohata N."/>
            <person name="Sano S."/>
            <person name="Moriya S."/>
            <person name="Momiyama H."/>
            <person name="Satoh N."/>
            <person name="Takami S."/>
            <person name="Terashima Y."/>
            <person name="Suzuki O."/>
            <person name="Nakagawa S."/>
            <person name="Senoh A."/>
            <person name="Mizoguchi H."/>
            <person name="Goto Y."/>
            <person name="Shimizu F."/>
            <person name="Wakebe H."/>
            <person name="Hishigaki H."/>
            <person name="Watanabe T."/>
            <person name="Sugiyama A."/>
            <person name="Takemoto M."/>
            <person name="Kawakami B."/>
            <person name="Yamazaki M."/>
            <person name="Watanabe K."/>
            <person name="Kumagai A."/>
            <person name="Itakura S."/>
            <person name="Fukuzumi Y."/>
            <person name="Fujimori Y."/>
            <person name="Komiyama M."/>
            <person name="Tashiro H."/>
            <person name="Tanigami A."/>
            <person name="Fujiwara T."/>
            <person name="Ono T."/>
            <person name="Yamada K."/>
            <person name="Fujii Y."/>
            <person name="Ozaki K."/>
            <person name="Hirao M."/>
            <person name="Ohmori Y."/>
            <person name="Kawabata A."/>
            <person name="Hikiji T."/>
            <person name="Kobatake N."/>
            <person name="Inagaki H."/>
            <person name="Ikema Y."/>
            <person name="Okamoto S."/>
            <person name="Okitani R."/>
            <person name="Kawakami T."/>
            <person name="Noguchi S."/>
            <person name="Itoh T."/>
            <person name="Shigeta K."/>
            <person name="Senba T."/>
            <person name="Matsumura K."/>
            <person name="Nakajima Y."/>
            <person name="Mizuno T."/>
            <person name="Morinaga M."/>
            <person name="Sasaki M."/>
            <person name="Togashi T."/>
            <person name="Oyama M."/>
            <person name="Hata H."/>
            <person name="Watanabe M."/>
            <person name="Komatsu T."/>
            <person name="Mizushima-Sugano J."/>
            <person name="Satoh T."/>
            <person name="Shirai Y."/>
            <person name="Takahashi Y."/>
            <person name="Nakagawa K."/>
            <person name="Okumura K."/>
            <person name="Nagase T."/>
            <person name="Nomura N."/>
            <person name="Kikuchi H."/>
            <person name="Masuho Y."/>
            <person name="Yamashita R."/>
            <person name="Nakai K."/>
            <person name="Yada T."/>
            <person name="Nakamura Y."/>
            <person name="Ohara O."/>
            <person name="Isogai T."/>
            <person name="Sugano S."/>
        </authorList>
    </citation>
    <scope>NUCLEOTIDE SEQUENCE [LARGE SCALE MRNA]</scope>
    <source>
        <tissue>Liver</tissue>
    </source>
</reference>
<reference key="4">
    <citation type="submission" date="2005-07" db="EMBL/GenBank/DDBJ databases">
        <authorList>
            <person name="Mural R.J."/>
            <person name="Istrail S."/>
            <person name="Sutton G.G."/>
            <person name="Florea L."/>
            <person name="Halpern A.L."/>
            <person name="Mobarry C.M."/>
            <person name="Lippert R."/>
            <person name="Walenz B."/>
            <person name="Shatkay H."/>
            <person name="Dew I."/>
            <person name="Miller J.R."/>
            <person name="Flanigan M.J."/>
            <person name="Edwards N.J."/>
            <person name="Bolanos R."/>
            <person name="Fasulo D."/>
            <person name="Halldorsson B.V."/>
            <person name="Hannenhalli S."/>
            <person name="Turner R."/>
            <person name="Yooseph S."/>
            <person name="Lu F."/>
            <person name="Nusskern D.R."/>
            <person name="Shue B.C."/>
            <person name="Zheng X.H."/>
            <person name="Zhong F."/>
            <person name="Delcher A.L."/>
            <person name="Huson D.H."/>
            <person name="Kravitz S.A."/>
            <person name="Mouchard L."/>
            <person name="Reinert K."/>
            <person name="Remington K.A."/>
            <person name="Clark A.G."/>
            <person name="Waterman M.S."/>
            <person name="Eichler E.E."/>
            <person name="Adams M.D."/>
            <person name="Hunkapiller M.W."/>
            <person name="Myers E.W."/>
            <person name="Venter J.C."/>
        </authorList>
    </citation>
    <scope>NUCLEOTIDE SEQUENCE [LARGE SCALE GENOMIC DNA]</scope>
</reference>
<reference key="5">
    <citation type="journal article" date="2004" name="Genome Res.">
        <title>The status, quality, and expansion of the NIH full-length cDNA project: the Mammalian Gene Collection (MGC).</title>
        <authorList>
            <consortium name="The MGC Project Team"/>
        </authorList>
    </citation>
    <scope>NUCLEOTIDE SEQUENCE [LARGE SCALE MRNA]</scope>
    <source>
        <tissue>Lung</tissue>
    </source>
</reference>
<reference key="6">
    <citation type="journal article" date="2005" name="J. Proteome Res.">
        <title>Human plasma N-glycoproteome analysis by immunoaffinity subtraction, hydrazide chemistry, and mass spectrometry.</title>
        <authorList>
            <person name="Liu T."/>
            <person name="Qian W.-J."/>
            <person name="Gritsenko M.A."/>
            <person name="Camp D.G. II"/>
            <person name="Monroe M.E."/>
            <person name="Moore R.J."/>
            <person name="Smith R.D."/>
        </authorList>
    </citation>
    <scope>GLYCOSYLATION [LARGE SCALE ANALYSIS] AT ASN-63</scope>
    <source>
        <tissue>Plasma</tissue>
    </source>
</reference>
<reference key="7">
    <citation type="journal article" date="2000" name="Atherosclerosis">
        <title>DNA sequence variation in human apolipoprotein C4 gene and its effect on plasma lipid profile.</title>
        <authorList>
            <person name="Kamboh M.I."/>
            <person name="Aston C.E."/>
            <person name="Hamman R.F."/>
        </authorList>
    </citation>
    <scope>VARIANTS PRO-36; ASP-52 AND ARG-96</scope>
</reference>
<reference key="8">
    <citation type="journal article" date="2006" name="Science">
        <title>The consensus coding sequences of human breast and colorectal cancers.</title>
        <authorList>
            <person name="Sjoeblom T."/>
            <person name="Jones S."/>
            <person name="Wood L.D."/>
            <person name="Parsons D.W."/>
            <person name="Lin J."/>
            <person name="Barber T.D."/>
            <person name="Mandelker D."/>
            <person name="Leary R.J."/>
            <person name="Ptak J."/>
            <person name="Silliman N."/>
            <person name="Szabo S."/>
            <person name="Buckhaults P."/>
            <person name="Farrell C."/>
            <person name="Meeh P."/>
            <person name="Markowitz S.D."/>
            <person name="Willis J."/>
            <person name="Dawson D."/>
            <person name="Willson J.K.V."/>
            <person name="Gazdar A.F."/>
            <person name="Hartigan J."/>
            <person name="Wu L."/>
            <person name="Liu C."/>
            <person name="Parmigiani G."/>
            <person name="Park B.H."/>
            <person name="Bachman K.E."/>
            <person name="Papadopoulos N."/>
            <person name="Vogelstein B."/>
            <person name="Kinzler K.W."/>
            <person name="Velculescu V.E."/>
        </authorList>
    </citation>
    <scope>VARIANT [LARGE SCALE ANALYSIS] GLN-75</scope>
</reference>
<feature type="signal peptide" evidence="1">
    <location>
        <begin position="1"/>
        <end position="27"/>
    </location>
</feature>
<feature type="chain" id="PRO_0000002036" description="Apolipoprotein C-IV">
    <location>
        <begin position="28"/>
        <end position="127"/>
    </location>
</feature>
<feature type="glycosylation site" description="N-linked (GlcNAc...) asparagine" evidence="3">
    <location>
        <position position="63"/>
    </location>
</feature>
<feature type="sequence variant" id="VAR_012081" description="In dbSNP:rs1132899." evidence="2 5">
    <original>L</original>
    <variation>P</variation>
    <location>
        <position position="36"/>
    </location>
</feature>
<feature type="sequence variant" id="VAR_012082" description="In dbSNP:rs12691089." evidence="2">
    <original>G</original>
    <variation>D</variation>
    <location>
        <position position="52"/>
    </location>
</feature>
<feature type="sequence variant" id="VAR_036540" description="In a breast cancer sample; somatic mutation." evidence="4">
    <original>P</original>
    <variation>Q</variation>
    <location>
        <position position="75"/>
    </location>
</feature>
<feature type="sequence variant" id="VAR_012068" description="In dbSNP:rs5167." evidence="2">
    <original>L</original>
    <variation>R</variation>
    <location>
        <position position="96"/>
    </location>
</feature>
<feature type="sequence variant" id="VAR_012069" description="In dbSNP:rs5168.">
    <original>Q</original>
    <variation>L</variation>
    <location>
        <position position="126"/>
    </location>
</feature>
<evidence type="ECO:0000250" key="1">
    <source>
        <dbReference type="UniProtKB" id="P55057"/>
    </source>
</evidence>
<evidence type="ECO:0000269" key="2">
    <source>
    </source>
</evidence>
<evidence type="ECO:0000269" key="3">
    <source>
    </source>
</evidence>
<evidence type="ECO:0000269" key="4">
    <source>
    </source>
</evidence>
<evidence type="ECO:0000269" key="5">
    <source ref="2"/>
</evidence>
<evidence type="ECO:0000305" key="6"/>
<organism>
    <name type="scientific">Homo sapiens</name>
    <name type="common">Human</name>
    <dbReference type="NCBI Taxonomy" id="9606"/>
    <lineage>
        <taxon>Eukaryota</taxon>
        <taxon>Metazoa</taxon>
        <taxon>Chordata</taxon>
        <taxon>Craniata</taxon>
        <taxon>Vertebrata</taxon>
        <taxon>Euteleostomi</taxon>
        <taxon>Mammalia</taxon>
        <taxon>Eutheria</taxon>
        <taxon>Euarchontoglires</taxon>
        <taxon>Primates</taxon>
        <taxon>Haplorrhini</taxon>
        <taxon>Catarrhini</taxon>
        <taxon>Hominidae</taxon>
        <taxon>Homo</taxon>
    </lineage>
</organism>
<keyword id="KW-0325">Glycoprotein</keyword>
<keyword id="KW-0445">Lipid transport</keyword>
<keyword id="KW-1267">Proteomics identification</keyword>
<keyword id="KW-1185">Reference proteome</keyword>
<keyword id="KW-0964">Secreted</keyword>
<keyword id="KW-0732">Signal</keyword>
<keyword id="KW-0813">Transport</keyword>
<protein>
    <recommendedName>
        <fullName>Apolipoprotein C-IV</fullName>
        <shortName>Apo-CIV</shortName>
        <shortName>ApoC-IV</shortName>
    </recommendedName>
    <alternativeName>
        <fullName>Apolipoprotein C4</fullName>
    </alternativeName>
</protein>
<name>APOC4_HUMAN</name>
<gene>
    <name type="primary">APOC4</name>
</gene>
<sequence>MSLLRNRLQALPALCLCVLVLACIGACQPEAQEGTLSPPPKLKMSRWSLVRGRMKELLETVVNRTRDGWQWFWSPSTFRGFMQTYYDDHLRDLGPLTKAWFLESKDSLLKKTHSLCPRLVCGDKDQG</sequence>
<proteinExistence type="evidence at protein level"/>